<feature type="transit peptide" description="Chloroplast" evidence="2">
    <location>
        <begin position="1"/>
        <end position="41"/>
    </location>
</feature>
<feature type="transit peptide" description="Thylakoid" evidence="1">
    <location>
        <begin position="42"/>
        <end position="98"/>
    </location>
</feature>
<feature type="chain" id="PRO_0000342094" description="UPF0603 protein OsI_019212, chloroplastic">
    <location>
        <begin position="99"/>
        <end position="299"/>
    </location>
</feature>
<feature type="transmembrane region" description="Helical" evidence="2">
    <location>
        <begin position="276"/>
        <end position="296"/>
    </location>
</feature>
<feature type="region of interest" description="Disordered" evidence="3">
    <location>
        <begin position="1"/>
        <end position="60"/>
    </location>
</feature>
<feature type="region of interest" description="Disordered" evidence="3">
    <location>
        <begin position="244"/>
        <end position="265"/>
    </location>
</feature>
<feature type="compositionally biased region" description="Low complexity" evidence="3">
    <location>
        <begin position="1"/>
        <end position="14"/>
    </location>
</feature>
<feature type="compositionally biased region" description="Low complexity" evidence="3">
    <location>
        <begin position="22"/>
        <end position="36"/>
    </location>
</feature>
<feature type="compositionally biased region" description="Basic and acidic residues" evidence="3">
    <location>
        <begin position="252"/>
        <end position="265"/>
    </location>
</feature>
<keyword id="KW-0150">Chloroplast</keyword>
<keyword id="KW-0472">Membrane</keyword>
<keyword id="KW-0934">Plastid</keyword>
<keyword id="KW-1185">Reference proteome</keyword>
<keyword id="KW-0793">Thylakoid</keyword>
<keyword id="KW-0809">Transit peptide</keyword>
<keyword id="KW-0812">Transmembrane</keyword>
<keyword id="KW-1133">Transmembrane helix</keyword>
<evidence type="ECO:0000250" key="1"/>
<evidence type="ECO:0000255" key="2"/>
<evidence type="ECO:0000256" key="3">
    <source>
        <dbReference type="SAM" id="MobiDB-lite"/>
    </source>
</evidence>
<evidence type="ECO:0000305" key="4"/>
<accession>A2Y4G9</accession>
<accession>B8AY23</accession>
<protein>
    <recommendedName>
        <fullName>UPF0603 protein OsI_019212, chloroplastic</fullName>
    </recommendedName>
</protein>
<sequence length="299" mass="31769">METLLSPSTLLSPLRGSKKKPASPAASASSSSSSPARSVVSCALRRQQPPPQAVAAWRGDGGRGGGVGSWATFLQHGLAAAALSLAISMAPAPAPAVASEFDVLNGGPPEDTYVVDDAGVLSRVTKSDVKRLVRDLESRKNIRINFITVRKLTSKADAFEYADQVLEKWYPTVEEGNNKGIVVLVTSQKEGAITGGPAFVQAVGDEILDSTVSENLPVLATDEKYNEAIYTTAKRLAAAIDGLPDPGGPTFKDNKRESNFKTKEETEEKRGQFTLVVGGLLVIAFVVPMAQYYAYISKK</sequence>
<gene>
    <name type="ORF">OsI_19898</name>
</gene>
<dbReference type="EMBL" id="CM000130">
    <property type="protein sequence ID" value="EEC79191.1"/>
    <property type="molecule type" value="Genomic_DNA"/>
</dbReference>
<dbReference type="SMR" id="A2Y4G9"/>
<dbReference type="STRING" id="39946.A2Y4G9"/>
<dbReference type="EnsemblPlants" id="BGIOSGA018092-TA">
    <property type="protein sequence ID" value="BGIOSGA018092-PA"/>
    <property type="gene ID" value="BGIOSGA018092"/>
</dbReference>
<dbReference type="Gramene" id="BGIOSGA018092-TA">
    <property type="protein sequence ID" value="BGIOSGA018092-PA"/>
    <property type="gene ID" value="BGIOSGA018092"/>
</dbReference>
<dbReference type="HOGENOM" id="CLU_065264_0_1_1"/>
<dbReference type="OMA" id="IPMVTYF"/>
<dbReference type="Proteomes" id="UP000007015">
    <property type="component" value="Chromosome 5"/>
</dbReference>
<dbReference type="GO" id="GO:0009535">
    <property type="term" value="C:chloroplast thylakoid membrane"/>
    <property type="evidence" value="ECO:0007669"/>
    <property type="project" value="UniProtKB-SubCell"/>
</dbReference>
<dbReference type="Gene3D" id="3.10.310.50">
    <property type="match status" value="1"/>
</dbReference>
<dbReference type="InterPro" id="IPR007621">
    <property type="entry name" value="TPM_dom"/>
</dbReference>
<dbReference type="PANTHER" id="PTHR30373">
    <property type="entry name" value="UPF0603 PROTEIN YGCG"/>
    <property type="match status" value="1"/>
</dbReference>
<dbReference type="PANTHER" id="PTHR30373:SF2">
    <property type="entry name" value="UPF0603 PROTEIN YGCG"/>
    <property type="match status" value="1"/>
</dbReference>
<dbReference type="Pfam" id="PF04536">
    <property type="entry name" value="TPM_phosphatase"/>
    <property type="match status" value="1"/>
</dbReference>
<name>U603_ORYSI</name>
<organism>
    <name type="scientific">Oryza sativa subsp. indica</name>
    <name type="common">Rice</name>
    <dbReference type="NCBI Taxonomy" id="39946"/>
    <lineage>
        <taxon>Eukaryota</taxon>
        <taxon>Viridiplantae</taxon>
        <taxon>Streptophyta</taxon>
        <taxon>Embryophyta</taxon>
        <taxon>Tracheophyta</taxon>
        <taxon>Spermatophyta</taxon>
        <taxon>Magnoliopsida</taxon>
        <taxon>Liliopsida</taxon>
        <taxon>Poales</taxon>
        <taxon>Poaceae</taxon>
        <taxon>BOP clade</taxon>
        <taxon>Oryzoideae</taxon>
        <taxon>Oryzeae</taxon>
        <taxon>Oryzinae</taxon>
        <taxon>Oryza</taxon>
        <taxon>Oryza sativa</taxon>
    </lineage>
</organism>
<proteinExistence type="inferred from homology"/>
<reference key="1">
    <citation type="journal article" date="2005" name="PLoS Biol.">
        <title>The genomes of Oryza sativa: a history of duplications.</title>
        <authorList>
            <person name="Yu J."/>
            <person name="Wang J."/>
            <person name="Lin W."/>
            <person name="Li S."/>
            <person name="Li H."/>
            <person name="Zhou J."/>
            <person name="Ni P."/>
            <person name="Dong W."/>
            <person name="Hu S."/>
            <person name="Zeng C."/>
            <person name="Zhang J."/>
            <person name="Zhang Y."/>
            <person name="Li R."/>
            <person name="Xu Z."/>
            <person name="Li S."/>
            <person name="Li X."/>
            <person name="Zheng H."/>
            <person name="Cong L."/>
            <person name="Lin L."/>
            <person name="Yin J."/>
            <person name="Geng J."/>
            <person name="Li G."/>
            <person name="Shi J."/>
            <person name="Liu J."/>
            <person name="Lv H."/>
            <person name="Li J."/>
            <person name="Wang J."/>
            <person name="Deng Y."/>
            <person name="Ran L."/>
            <person name="Shi X."/>
            <person name="Wang X."/>
            <person name="Wu Q."/>
            <person name="Li C."/>
            <person name="Ren X."/>
            <person name="Wang J."/>
            <person name="Wang X."/>
            <person name="Li D."/>
            <person name="Liu D."/>
            <person name="Zhang X."/>
            <person name="Ji Z."/>
            <person name="Zhao W."/>
            <person name="Sun Y."/>
            <person name="Zhang Z."/>
            <person name="Bao J."/>
            <person name="Han Y."/>
            <person name="Dong L."/>
            <person name="Ji J."/>
            <person name="Chen P."/>
            <person name="Wu S."/>
            <person name="Liu J."/>
            <person name="Xiao Y."/>
            <person name="Bu D."/>
            <person name="Tan J."/>
            <person name="Yang L."/>
            <person name="Ye C."/>
            <person name="Zhang J."/>
            <person name="Xu J."/>
            <person name="Zhou Y."/>
            <person name="Yu Y."/>
            <person name="Zhang B."/>
            <person name="Zhuang S."/>
            <person name="Wei H."/>
            <person name="Liu B."/>
            <person name="Lei M."/>
            <person name="Yu H."/>
            <person name="Li Y."/>
            <person name="Xu H."/>
            <person name="Wei S."/>
            <person name="He X."/>
            <person name="Fang L."/>
            <person name="Zhang Z."/>
            <person name="Zhang Y."/>
            <person name="Huang X."/>
            <person name="Su Z."/>
            <person name="Tong W."/>
            <person name="Li J."/>
            <person name="Tong Z."/>
            <person name="Li S."/>
            <person name="Ye J."/>
            <person name="Wang L."/>
            <person name="Fang L."/>
            <person name="Lei T."/>
            <person name="Chen C.-S."/>
            <person name="Chen H.-C."/>
            <person name="Xu Z."/>
            <person name="Li H."/>
            <person name="Huang H."/>
            <person name="Zhang F."/>
            <person name="Xu H."/>
            <person name="Li N."/>
            <person name="Zhao C."/>
            <person name="Li S."/>
            <person name="Dong L."/>
            <person name="Huang Y."/>
            <person name="Li L."/>
            <person name="Xi Y."/>
            <person name="Qi Q."/>
            <person name="Li W."/>
            <person name="Zhang B."/>
            <person name="Hu W."/>
            <person name="Zhang Y."/>
            <person name="Tian X."/>
            <person name="Jiao Y."/>
            <person name="Liang X."/>
            <person name="Jin J."/>
            <person name="Gao L."/>
            <person name="Zheng W."/>
            <person name="Hao B."/>
            <person name="Liu S.-M."/>
            <person name="Wang W."/>
            <person name="Yuan L."/>
            <person name="Cao M."/>
            <person name="McDermott J."/>
            <person name="Samudrala R."/>
            <person name="Wang J."/>
            <person name="Wong G.K.-S."/>
            <person name="Yang H."/>
        </authorList>
    </citation>
    <scope>NUCLEOTIDE SEQUENCE [LARGE SCALE GENOMIC DNA]</scope>
    <source>
        <strain>cv. 93-11</strain>
    </source>
</reference>
<comment type="subcellular location">
    <subcellularLocation>
        <location evidence="1">Plastid</location>
        <location evidence="1">Chloroplast thylakoid membrane</location>
        <topology evidence="1">Single-pass membrane protein</topology>
        <orientation evidence="1">Lumenal side</orientation>
    </subcellularLocation>
</comment>
<comment type="similarity">
    <text evidence="4">Belongs to the UPF0603 family.</text>
</comment>